<protein>
    <recommendedName>
        <fullName>Tetratricopeptide repeat protein 17</fullName>
        <shortName>TPR repeat protein 17</shortName>
    </recommendedName>
</protein>
<gene>
    <name type="primary">Ttc17</name>
</gene>
<dbReference type="EMBL" id="AABR06024800">
    <property type="status" value="NOT_ANNOTATED_CDS"/>
    <property type="molecule type" value="Genomic_DNA"/>
</dbReference>
<dbReference type="EMBL" id="AABR06024801">
    <property type="status" value="NOT_ANNOTATED_CDS"/>
    <property type="molecule type" value="Genomic_DNA"/>
</dbReference>
<dbReference type="EMBL" id="AABR06024802">
    <property type="status" value="NOT_ANNOTATED_CDS"/>
    <property type="molecule type" value="Genomic_DNA"/>
</dbReference>
<dbReference type="EMBL" id="AABR06024803">
    <property type="status" value="NOT_ANNOTATED_CDS"/>
    <property type="molecule type" value="Genomic_DNA"/>
</dbReference>
<dbReference type="EMBL" id="BC168714">
    <property type="protein sequence ID" value="AAI68714.1"/>
    <property type="molecule type" value="mRNA"/>
</dbReference>
<dbReference type="RefSeq" id="NP_001101222.2">
    <property type="nucleotide sequence ID" value="NM_001107752.2"/>
</dbReference>
<dbReference type="SMR" id="B5DEL3"/>
<dbReference type="FunCoup" id="B5DEL3">
    <property type="interactions" value="2050"/>
</dbReference>
<dbReference type="STRING" id="10116.ENSRNOP00000014088"/>
<dbReference type="PhosphoSitePlus" id="B5DEL3"/>
<dbReference type="PaxDb" id="10116-ENSRNOP00000014088"/>
<dbReference type="PeptideAtlas" id="B5DEL3"/>
<dbReference type="Ensembl" id="ENSRNOT00000014088.8">
    <property type="protein sequence ID" value="ENSRNOP00000014088.6"/>
    <property type="gene ID" value="ENSRNOG00000010495.8"/>
</dbReference>
<dbReference type="GeneID" id="311224"/>
<dbReference type="KEGG" id="rno:311224"/>
<dbReference type="AGR" id="RGD:1305410"/>
<dbReference type="CTD" id="55761"/>
<dbReference type="RGD" id="1305410">
    <property type="gene designation" value="Ttc17"/>
</dbReference>
<dbReference type="eggNOG" id="KOG4507">
    <property type="taxonomic scope" value="Eukaryota"/>
</dbReference>
<dbReference type="GeneTree" id="ENSGT00390000006196"/>
<dbReference type="HOGENOM" id="CLU_008510_0_0_1"/>
<dbReference type="InParanoid" id="B5DEL3"/>
<dbReference type="OMA" id="PDDHAKQ"/>
<dbReference type="OrthoDB" id="2115703at2759"/>
<dbReference type="PhylomeDB" id="B5DEL3"/>
<dbReference type="TreeFam" id="TF315005"/>
<dbReference type="PRO" id="PR:B5DEL3"/>
<dbReference type="Proteomes" id="UP000002494">
    <property type="component" value="Chromosome 3"/>
</dbReference>
<dbReference type="Bgee" id="ENSRNOG00000010495">
    <property type="expression patterns" value="Expressed in liver and 19 other cell types or tissues"/>
</dbReference>
<dbReference type="GO" id="GO:0015629">
    <property type="term" value="C:actin cytoskeleton"/>
    <property type="evidence" value="ECO:0000250"/>
    <property type="project" value="UniProtKB"/>
</dbReference>
<dbReference type="GO" id="GO:0005737">
    <property type="term" value="C:cytoplasm"/>
    <property type="evidence" value="ECO:0000314"/>
    <property type="project" value="UniProtKB"/>
</dbReference>
<dbReference type="GO" id="GO:0005829">
    <property type="term" value="C:cytosol"/>
    <property type="evidence" value="ECO:0007669"/>
    <property type="project" value="Ensembl"/>
</dbReference>
<dbReference type="GO" id="GO:0005886">
    <property type="term" value="C:plasma membrane"/>
    <property type="evidence" value="ECO:0000250"/>
    <property type="project" value="UniProtKB"/>
</dbReference>
<dbReference type="GO" id="GO:0030041">
    <property type="term" value="P:actin filament polymerization"/>
    <property type="evidence" value="ECO:0000250"/>
    <property type="project" value="UniProtKB"/>
</dbReference>
<dbReference type="GO" id="GO:0044782">
    <property type="term" value="P:cilium organization"/>
    <property type="evidence" value="ECO:0000250"/>
    <property type="project" value="UniProtKB"/>
</dbReference>
<dbReference type="FunFam" id="1.25.40.10:FF:000053">
    <property type="entry name" value="Tetratricopeptide repeat domain 17"/>
    <property type="match status" value="1"/>
</dbReference>
<dbReference type="FunFam" id="1.25.40.10:FF:000061">
    <property type="entry name" value="Tetratricopeptide repeat domain 17"/>
    <property type="match status" value="1"/>
</dbReference>
<dbReference type="FunFam" id="1.25.40.10:FF:000111">
    <property type="entry name" value="tetratricopeptide repeat protein 17 isoform X1"/>
    <property type="match status" value="1"/>
</dbReference>
<dbReference type="Gene3D" id="1.25.40.10">
    <property type="entry name" value="Tetratricopeptide repeat domain"/>
    <property type="match status" value="3"/>
</dbReference>
<dbReference type="InterPro" id="IPR011990">
    <property type="entry name" value="TPR-like_helical_dom_sf"/>
</dbReference>
<dbReference type="InterPro" id="IPR019734">
    <property type="entry name" value="TPR_rpt"/>
</dbReference>
<dbReference type="InterPro" id="IPR052630">
    <property type="entry name" value="TTC17"/>
</dbReference>
<dbReference type="PANTHER" id="PTHR16091:SF1">
    <property type="entry name" value="TETRATRICOPEPTIDE REPEAT PROTEIN 17"/>
    <property type="match status" value="1"/>
</dbReference>
<dbReference type="PANTHER" id="PTHR16091">
    <property type="entry name" value="TTC17 PROTEIN"/>
    <property type="match status" value="1"/>
</dbReference>
<dbReference type="Pfam" id="PF13181">
    <property type="entry name" value="TPR_8"/>
    <property type="match status" value="1"/>
</dbReference>
<dbReference type="SMART" id="SM00028">
    <property type="entry name" value="TPR"/>
    <property type="match status" value="7"/>
</dbReference>
<dbReference type="SUPFAM" id="SSF48452">
    <property type="entry name" value="TPR-like"/>
    <property type="match status" value="1"/>
</dbReference>
<dbReference type="PROSITE" id="PS50005">
    <property type="entry name" value="TPR"/>
    <property type="match status" value="4"/>
</dbReference>
<dbReference type="PROSITE" id="PS50293">
    <property type="entry name" value="TPR_REGION"/>
    <property type="match status" value="3"/>
</dbReference>
<proteinExistence type="evidence at protein level"/>
<keyword id="KW-1003">Cell membrane</keyword>
<keyword id="KW-0970">Cilium biogenesis/degradation</keyword>
<keyword id="KW-0175">Coiled coil</keyword>
<keyword id="KW-0963">Cytoplasm</keyword>
<keyword id="KW-0206">Cytoskeleton</keyword>
<keyword id="KW-0472">Membrane</keyword>
<keyword id="KW-1185">Reference proteome</keyword>
<keyword id="KW-0677">Repeat</keyword>
<keyword id="KW-0802">TPR repeat</keyword>
<accession>B5DEL3</accession>
<accession>F1MA48</accession>
<name>TTC17_RAT</name>
<feature type="chain" id="PRO_0000426008" description="Tetratricopeptide repeat protein 17">
    <location>
        <begin position="1"/>
        <end position="1198"/>
    </location>
</feature>
<feature type="repeat" description="TPR 1">
    <location>
        <begin position="295"/>
        <end position="328"/>
    </location>
</feature>
<feature type="repeat" description="TPR 2">
    <location>
        <begin position="619"/>
        <end position="652"/>
    </location>
</feature>
<feature type="repeat" description="TPR 3">
    <location>
        <begin position="689"/>
        <end position="722"/>
    </location>
</feature>
<feature type="repeat" description="TPR 4">
    <location>
        <begin position="1071"/>
        <end position="1105"/>
    </location>
</feature>
<feature type="repeat" description="TPR 5">
    <location>
        <begin position="1108"/>
        <end position="1141"/>
    </location>
</feature>
<feature type="repeat" description="TPR 6">
    <location>
        <begin position="1142"/>
        <end position="1175"/>
    </location>
</feature>
<feature type="region of interest" description="Disordered" evidence="3">
    <location>
        <begin position="771"/>
        <end position="825"/>
    </location>
</feature>
<feature type="region of interest" description="Disordered" evidence="3">
    <location>
        <begin position="903"/>
        <end position="924"/>
    </location>
</feature>
<feature type="coiled-coil region" evidence="2">
    <location>
        <begin position="340"/>
        <end position="382"/>
    </location>
</feature>
<feature type="compositionally biased region" description="Basic residues" evidence="3">
    <location>
        <begin position="903"/>
        <end position="914"/>
    </location>
</feature>
<sequence length="1198" mass="135721">MAAAIGVRGRFELLSCSGPGWLISLSALLSVVARGALATTHWVVTEDGKIQQQVDSPMNLKHPHDLVILMRQETTVNYLKELEKQLVAQKIHIEENEDRDTGLEQRHNKEDPDCIKAKVPLGDLDLYDGTYITLESKDVRPEDFIDTESPVPPDPEQPDCTKILELPYSIHAFQHLRGVQERVNLSAPLLPKEDPIFTYLSKRLGRSIDDIGHLIHEGLQKNSSSWVLYNLASFYWRIKNEPYQVVECTMRALHFSSRHNKDIALVNLANVLHRAHFSADAAVVVHAALDDSAFFTSYYTLGNIYAMLGEYNHSVLCYDHALQAKPGFEQAIKRKHAVLCQQKLEQKLEAQHRSLQRTLNELKEYQKQHDHYLRQQEILEKHKLIQEEQILRNIIHETQMAKEAQLGNHQICRLVNQQHSLHCQWDQPVRYHRGDIFENVDYVQFGDDSSTSSMMSVNFDVPTNQSDVSESVRSSPVAHSVLWVWGRDSDAYRDKQHILWPKRADCTDSYPRVPLGGELPTYFLPPENKGLRIHELTSDDYSSEEEAQTPDCSITDFRKSHTLSYLVKELEVRMDLKAKIPDDHARKILLSRIKNYTIPEEEIGSFLFHAINKPNAPVWLILNEAGLYWRAVGNSTFAIACLQRALNLAPVQYQDIPLVNLANLLIHYGLHLDATKLLLQALAVNSSEPLTFLSLGNAYLALKNVSGALEAFRQALKLTTRCPECESSLKLIRCMQFYPFLYNITSSVCSGHCHEKTLDNSHDKQKYFAKPQSLDAAEEEPSRHGADEDPVLSVENAGRDSDALRLESTVVEESNGSDEVEKSEETKMSEEILALVDEFQQAWPLEGLGGTLEMKGRRLDLQGIRVLKKGPQDGVAKSSCYGDCRSEDDEATEWITFQVKRVKKPKGDHKKPPGKKVEASQAENGQRYQANLEITGPKVASPGPQEKKRDYQSMGWPSPDECLKLRWVELTAIVSTWLAVSSKNIDITEHIDFATPIQQPAMEPLCNGNLPTSMHTLDHLHGVSNRASLHYTGESQLTEVLQNLGKDQYPQQSLEQIGTRIAKVLEKNQTSWVLSSMAALYWRVKGQGKKAIDCLRQALHYAPHQMKDVPLISLANILHNAKLWNDAVVVATMAVEIAPHFAVNHFTLGNVYVAMEEFEKALVWYESTLKLQPEFVPAKNRIQTIQCHLMLKKGRRSP</sequence>
<organism>
    <name type="scientific">Rattus norvegicus</name>
    <name type="common">Rat</name>
    <dbReference type="NCBI Taxonomy" id="10116"/>
    <lineage>
        <taxon>Eukaryota</taxon>
        <taxon>Metazoa</taxon>
        <taxon>Chordata</taxon>
        <taxon>Craniata</taxon>
        <taxon>Vertebrata</taxon>
        <taxon>Euteleostomi</taxon>
        <taxon>Mammalia</taxon>
        <taxon>Eutheria</taxon>
        <taxon>Euarchontoglires</taxon>
        <taxon>Glires</taxon>
        <taxon>Rodentia</taxon>
        <taxon>Myomorpha</taxon>
        <taxon>Muroidea</taxon>
        <taxon>Muridae</taxon>
        <taxon>Murinae</taxon>
        <taxon>Rattus</taxon>
    </lineage>
</organism>
<comment type="function">
    <text evidence="1">Plays a role in primary ciliogenesis by modulating actin polymerization.</text>
</comment>
<comment type="subunit">
    <text evidence="1">Interacts with CATIP.</text>
</comment>
<comment type="subcellular location">
    <subcellularLocation>
        <location evidence="4">Cytoplasm</location>
    </subcellularLocation>
    <subcellularLocation>
        <location evidence="1">Cell membrane</location>
    </subcellularLocation>
    <subcellularLocation>
        <location evidence="1">Cytoplasm</location>
        <location evidence="1">Cytoskeleton</location>
    </subcellularLocation>
    <text evidence="1">Localized with CATIP at F-actin rich zones and at dynamic plasma membrane protrusions.</text>
</comment>
<comment type="tissue specificity">
    <text evidence="4">Expressed in germ cells as well as in somatic cells of the testis (at protein level). Ubiquitous.</text>
</comment>
<comment type="similarity">
    <text evidence="5">Belongs to the TTC17 family.</text>
</comment>
<reference key="1">
    <citation type="journal article" date="2004" name="Nature">
        <title>Genome sequence of the Brown Norway rat yields insights into mammalian evolution.</title>
        <authorList>
            <person name="Gibbs R.A."/>
            <person name="Weinstock G.M."/>
            <person name="Metzker M.L."/>
            <person name="Muzny D.M."/>
            <person name="Sodergren E.J."/>
            <person name="Scherer S."/>
            <person name="Scott G."/>
            <person name="Steffen D."/>
            <person name="Worley K.C."/>
            <person name="Burch P.E."/>
            <person name="Okwuonu G."/>
            <person name="Hines S."/>
            <person name="Lewis L."/>
            <person name="Deramo C."/>
            <person name="Delgado O."/>
            <person name="Dugan-Rocha S."/>
            <person name="Miner G."/>
            <person name="Morgan M."/>
            <person name="Hawes A."/>
            <person name="Gill R."/>
            <person name="Holt R.A."/>
            <person name="Adams M.D."/>
            <person name="Amanatides P.G."/>
            <person name="Baden-Tillson H."/>
            <person name="Barnstead M."/>
            <person name="Chin S."/>
            <person name="Evans C.A."/>
            <person name="Ferriera S."/>
            <person name="Fosler C."/>
            <person name="Glodek A."/>
            <person name="Gu Z."/>
            <person name="Jennings D."/>
            <person name="Kraft C.L."/>
            <person name="Nguyen T."/>
            <person name="Pfannkoch C.M."/>
            <person name="Sitter C."/>
            <person name="Sutton G.G."/>
            <person name="Venter J.C."/>
            <person name="Woodage T."/>
            <person name="Smith D."/>
            <person name="Lee H.-M."/>
            <person name="Gustafson E."/>
            <person name="Cahill P."/>
            <person name="Kana A."/>
            <person name="Doucette-Stamm L."/>
            <person name="Weinstock K."/>
            <person name="Fechtel K."/>
            <person name="Weiss R.B."/>
            <person name="Dunn D.M."/>
            <person name="Green E.D."/>
            <person name="Blakesley R.W."/>
            <person name="Bouffard G.G."/>
            <person name="De Jong P.J."/>
            <person name="Osoegawa K."/>
            <person name="Zhu B."/>
            <person name="Marra M."/>
            <person name="Schein J."/>
            <person name="Bosdet I."/>
            <person name="Fjell C."/>
            <person name="Jones S."/>
            <person name="Krzywinski M."/>
            <person name="Mathewson C."/>
            <person name="Siddiqui A."/>
            <person name="Wye N."/>
            <person name="McPherson J."/>
            <person name="Zhao S."/>
            <person name="Fraser C.M."/>
            <person name="Shetty J."/>
            <person name="Shatsman S."/>
            <person name="Geer K."/>
            <person name="Chen Y."/>
            <person name="Abramzon S."/>
            <person name="Nierman W.C."/>
            <person name="Havlak P.H."/>
            <person name="Chen R."/>
            <person name="Durbin K.J."/>
            <person name="Egan A."/>
            <person name="Ren Y."/>
            <person name="Song X.-Z."/>
            <person name="Li B."/>
            <person name="Liu Y."/>
            <person name="Qin X."/>
            <person name="Cawley S."/>
            <person name="Cooney A.J."/>
            <person name="D'Souza L.M."/>
            <person name="Martin K."/>
            <person name="Wu J.Q."/>
            <person name="Gonzalez-Garay M.L."/>
            <person name="Jackson A.R."/>
            <person name="Kalafus K.J."/>
            <person name="McLeod M.P."/>
            <person name="Milosavljevic A."/>
            <person name="Virk D."/>
            <person name="Volkov A."/>
            <person name="Wheeler D.A."/>
            <person name="Zhang Z."/>
            <person name="Bailey J.A."/>
            <person name="Eichler E.E."/>
            <person name="Tuzun E."/>
            <person name="Birney E."/>
            <person name="Mongin E."/>
            <person name="Ureta-Vidal A."/>
            <person name="Woodwark C."/>
            <person name="Zdobnov E."/>
            <person name="Bork P."/>
            <person name="Suyama M."/>
            <person name="Torrents D."/>
            <person name="Alexandersson M."/>
            <person name="Trask B.J."/>
            <person name="Young J.M."/>
            <person name="Huang H."/>
            <person name="Wang H."/>
            <person name="Xing H."/>
            <person name="Daniels S."/>
            <person name="Gietzen D."/>
            <person name="Schmidt J."/>
            <person name="Stevens K."/>
            <person name="Vitt U."/>
            <person name="Wingrove J."/>
            <person name="Camara F."/>
            <person name="Mar Alba M."/>
            <person name="Abril J.F."/>
            <person name="Guigo R."/>
            <person name="Smit A."/>
            <person name="Dubchak I."/>
            <person name="Rubin E.M."/>
            <person name="Couronne O."/>
            <person name="Poliakov A."/>
            <person name="Huebner N."/>
            <person name="Ganten D."/>
            <person name="Goesele C."/>
            <person name="Hummel O."/>
            <person name="Kreitler T."/>
            <person name="Lee Y.-A."/>
            <person name="Monti J."/>
            <person name="Schulz H."/>
            <person name="Zimdahl H."/>
            <person name="Himmelbauer H."/>
            <person name="Lehrach H."/>
            <person name="Jacob H.J."/>
            <person name="Bromberg S."/>
            <person name="Gullings-Handley J."/>
            <person name="Jensen-Seaman M.I."/>
            <person name="Kwitek A.E."/>
            <person name="Lazar J."/>
            <person name="Pasko D."/>
            <person name="Tonellato P.J."/>
            <person name="Twigger S."/>
            <person name="Ponting C.P."/>
            <person name="Duarte J.M."/>
            <person name="Rice S."/>
            <person name="Goodstadt L."/>
            <person name="Beatson S.A."/>
            <person name="Emes R.D."/>
            <person name="Winter E.E."/>
            <person name="Webber C."/>
            <person name="Brandt P."/>
            <person name="Nyakatura G."/>
            <person name="Adetobi M."/>
            <person name="Chiaromonte F."/>
            <person name="Elnitski L."/>
            <person name="Eswara P."/>
            <person name="Hardison R.C."/>
            <person name="Hou M."/>
            <person name="Kolbe D."/>
            <person name="Makova K."/>
            <person name="Miller W."/>
            <person name="Nekrutenko A."/>
            <person name="Riemer C."/>
            <person name="Schwartz S."/>
            <person name="Taylor J."/>
            <person name="Yang S."/>
            <person name="Zhang Y."/>
            <person name="Lindpaintner K."/>
            <person name="Andrews T.D."/>
            <person name="Caccamo M."/>
            <person name="Clamp M."/>
            <person name="Clarke L."/>
            <person name="Curwen V."/>
            <person name="Durbin R.M."/>
            <person name="Eyras E."/>
            <person name="Searle S.M."/>
            <person name="Cooper G.M."/>
            <person name="Batzoglou S."/>
            <person name="Brudno M."/>
            <person name="Sidow A."/>
            <person name="Stone E.A."/>
            <person name="Payseur B.A."/>
            <person name="Bourque G."/>
            <person name="Lopez-Otin C."/>
            <person name="Puente X.S."/>
            <person name="Chakrabarti K."/>
            <person name="Chatterji S."/>
            <person name="Dewey C."/>
            <person name="Pachter L."/>
            <person name="Bray N."/>
            <person name="Yap V.B."/>
            <person name="Caspi A."/>
            <person name="Tesler G."/>
            <person name="Pevzner P.A."/>
            <person name="Haussler D."/>
            <person name="Roskin K.M."/>
            <person name="Baertsch R."/>
            <person name="Clawson H."/>
            <person name="Furey T.S."/>
            <person name="Hinrichs A.S."/>
            <person name="Karolchik D."/>
            <person name="Kent W.J."/>
            <person name="Rosenbloom K.R."/>
            <person name="Trumbower H."/>
            <person name="Weirauch M."/>
            <person name="Cooper D.N."/>
            <person name="Stenson P.D."/>
            <person name="Ma B."/>
            <person name="Brent M."/>
            <person name="Arumugam M."/>
            <person name="Shteynberg D."/>
            <person name="Copley R.R."/>
            <person name="Taylor M.S."/>
            <person name="Riethman H."/>
            <person name="Mudunuri U."/>
            <person name="Peterson J."/>
            <person name="Guyer M."/>
            <person name="Felsenfeld A."/>
            <person name="Old S."/>
            <person name="Mockrin S."/>
            <person name="Collins F.S."/>
        </authorList>
    </citation>
    <scope>NUCLEOTIDE SEQUENCE [LARGE SCALE GENOMIC DNA]</scope>
    <source>
        <strain>Brown Norway</strain>
    </source>
</reference>
<reference key="2">
    <citation type="journal article" date="2004" name="Genome Res.">
        <title>The status, quality, and expansion of the NIH full-length cDNA project: the Mammalian Gene Collection (MGC).</title>
        <authorList>
            <consortium name="The MGC Project Team"/>
        </authorList>
    </citation>
    <scope>NUCLEOTIDE SEQUENCE [LARGE SCALE MRNA]</scope>
    <source>
        <tissue>Kidney</tissue>
    </source>
</reference>
<reference key="3">
    <citation type="journal article" date="2014" name="PLoS ONE">
        <title>C2orf62 and TTC17 Are Involved in Actin Organization and Ciliogenesis in Zebrafish and Human.</title>
        <authorList>
            <person name="Bontems F."/>
            <person name="Fish R.J."/>
            <person name="Borlat I."/>
            <person name="Lembo F."/>
            <person name="Chocu S."/>
            <person name="Chalmel F."/>
            <person name="Borg J.P."/>
            <person name="Pineau C."/>
            <person name="Neerman-Arbez M."/>
            <person name="Bairoch A."/>
            <person name="Lane L."/>
        </authorList>
    </citation>
    <scope>SUBCELLULAR LOCATION</scope>
    <scope>TISSUE SPECIFICITY</scope>
</reference>
<evidence type="ECO:0000250" key="1"/>
<evidence type="ECO:0000255" key="2"/>
<evidence type="ECO:0000256" key="3">
    <source>
        <dbReference type="SAM" id="MobiDB-lite"/>
    </source>
</evidence>
<evidence type="ECO:0000269" key="4">
    <source>
    </source>
</evidence>
<evidence type="ECO:0000305" key="5"/>